<organism evidence="3">
    <name type="scientific">Euplotes nobilii</name>
    <name type="common">Ciliate</name>
    <dbReference type="NCBI Taxonomy" id="184062"/>
    <lineage>
        <taxon>Eukaryota</taxon>
        <taxon>Sar</taxon>
        <taxon>Alveolata</taxon>
        <taxon>Ciliophora</taxon>
        <taxon>Intramacronucleata</taxon>
        <taxon>Spirotrichea</taxon>
        <taxon>Hypotrichia</taxon>
        <taxon>Euplotida</taxon>
        <taxon>Euplotidae</taxon>
        <taxon>Euplotes</taxon>
    </lineage>
</organism>
<feature type="chain" id="PRO_0000186199" description="Mating pheromone En-1">
    <location>
        <begin position="1"/>
        <end position="52"/>
    </location>
</feature>
<feature type="disulfide bond" evidence="2">
    <location>
        <begin position="11"/>
        <end position="37"/>
    </location>
</feature>
<feature type="disulfide bond" evidence="2">
    <location>
        <begin position="23"/>
        <end position="33"/>
    </location>
</feature>
<feature type="disulfide bond" evidence="2">
    <location>
        <begin position="30"/>
        <end position="52"/>
    </location>
</feature>
<feature type="disulfide bond" evidence="2">
    <location>
        <begin position="34"/>
        <end position="46"/>
    </location>
</feature>
<feature type="turn" evidence="4">
    <location>
        <begin position="2"/>
        <end position="5"/>
    </location>
</feature>
<feature type="turn" evidence="4">
    <location>
        <begin position="8"/>
        <end position="10"/>
    </location>
</feature>
<feature type="helix" evidence="4">
    <location>
        <begin position="16"/>
        <end position="23"/>
    </location>
</feature>
<feature type="strand" evidence="4">
    <location>
        <begin position="25"/>
        <end position="28"/>
    </location>
</feature>
<feature type="helix" evidence="4">
    <location>
        <begin position="31"/>
        <end position="36"/>
    </location>
</feature>
<feature type="helix" evidence="4">
    <location>
        <begin position="40"/>
        <end position="47"/>
    </location>
</feature>
<proteinExistence type="evidence at protein level"/>
<protein>
    <recommendedName>
        <fullName>Mating pheromone En-1</fullName>
    </recommendedName>
</protein>
<accession>P83441</accession>
<name>MEN1_EUPNO</name>
<reference key="1">
    <citation type="journal article" date="2003" name="Biochim. Biophys. Acta">
        <title>Structural characterization of En-1, a cold-adapted protein pheromone isolated from the Antarctic ciliate Euplotes nobilii.</title>
        <authorList>
            <person name="Alimenti C."/>
            <person name="Ortenzi C."/>
            <person name="Carratore V."/>
            <person name="Luporini P."/>
        </authorList>
    </citation>
    <scope>PROTEIN SEQUENCE</scope>
    <scope>FUNCTION</scope>
    <scope>SUBCELLULAR LOCATION</scope>
    <scope>MASS SPECTROMETRY</scope>
    <source>
        <strain>AC-1</strain>
    </source>
</reference>
<reference key="2">
    <citation type="journal article" date="2009" name="IUBMB Life">
        <title>Molecular cold-adaptation: comparative analysis of two homologous families of psychrophilic and mesophilic signal proteins of the protozoan ciliate, Euplotes.</title>
        <authorList>
            <person name="Alimenti C."/>
            <person name="Vallesi A."/>
            <person name="Pedrini B."/>
            <person name="Wuthrich K."/>
            <person name="Luporini P."/>
        </authorList>
    </citation>
    <scope>STRUCTURE BY NMR</scope>
    <scope>DISULFIDE BONDS</scope>
</reference>
<comment type="function">
    <text evidence="1">Mating ciliate pheromones (or gamones) are diffusible extracellular communication signals that distinguish different intraspecific classes of cells commonly referred to as 'mating types'. They prepare the latter for conjugation by changing their cell surface properties.</text>
</comment>
<comment type="subcellular location">
    <subcellularLocation>
        <location evidence="1 3">Secreted</location>
    </subcellularLocation>
</comment>
<comment type="mass spectrometry"/>
<evidence type="ECO:0000269" key="1">
    <source>
    </source>
</evidence>
<evidence type="ECO:0000269" key="2">
    <source>
    </source>
</evidence>
<evidence type="ECO:0000305" key="3"/>
<evidence type="ECO:0007829" key="4">
    <source>
        <dbReference type="PDB" id="2KC6"/>
    </source>
</evidence>
<dbReference type="PDB" id="2KC6">
    <property type="method" value="NMR"/>
    <property type="chains" value="A=1-52"/>
</dbReference>
<dbReference type="PDB" id="2NSV">
    <property type="method" value="NMR"/>
    <property type="chains" value="A=1-52"/>
</dbReference>
<dbReference type="PDBsum" id="2KC6"/>
<dbReference type="PDBsum" id="2NSV"/>
<dbReference type="BMRB" id="P83441"/>
<dbReference type="SMR" id="P83441"/>
<dbReference type="EvolutionaryTrace" id="P83441"/>
<dbReference type="GO" id="GO:0005576">
    <property type="term" value="C:extracellular region"/>
    <property type="evidence" value="ECO:0007669"/>
    <property type="project" value="UniProtKB-SubCell"/>
</dbReference>
<dbReference type="GO" id="GO:0005186">
    <property type="term" value="F:pheromone activity"/>
    <property type="evidence" value="ECO:0007669"/>
    <property type="project" value="UniProtKB-KW"/>
</dbReference>
<dbReference type="Gene3D" id="1.20.50.40">
    <property type="match status" value="1"/>
</dbReference>
<sequence>NPEDWFTPDTCAYGDSNTAWTTCTTPGQTCYTCCSSCFDVVGEQACQMSAQC</sequence>
<keyword id="KW-0002">3D-structure</keyword>
<keyword id="KW-0903">Direct protein sequencing</keyword>
<keyword id="KW-1015">Disulfide bond</keyword>
<keyword id="KW-0588">Pheromone</keyword>
<keyword id="KW-0964">Secreted</keyword>